<accession>Q3A396</accession>
<protein>
    <recommendedName>
        <fullName evidence="1">Elongation factor Ts</fullName>
        <shortName evidence="1">EF-Ts</shortName>
    </recommendedName>
</protein>
<keyword id="KW-0963">Cytoplasm</keyword>
<keyword id="KW-0251">Elongation factor</keyword>
<keyword id="KW-0648">Protein biosynthesis</keyword>
<keyword id="KW-1185">Reference proteome</keyword>
<comment type="function">
    <text evidence="1">Associates with the EF-Tu.GDP complex and induces the exchange of GDP to GTP. It remains bound to the aminoacyl-tRNA.EF-Tu.GTP complex up to the GTP hydrolysis stage on the ribosome.</text>
</comment>
<comment type="subcellular location">
    <subcellularLocation>
        <location evidence="1">Cytoplasm</location>
    </subcellularLocation>
</comment>
<comment type="similarity">
    <text evidence="1">Belongs to the EF-Ts family.</text>
</comment>
<sequence>MKITASMVSELRTKTGAGMMDCKKALSEADGNIEEAVDILRKKGLSAAAKKADRAAAEGLVVGLNEGSCGVLVEVNAETDFVAKNANFQEFTNGVAKVVVSSKPADLEALKALPFPGTDRTVAEEQTHQIATIGENINLRRFVCFDVAQGAVAVYIHGVGKIGVLVELETSKGDDERVAALGRNLAMHIAAANPQYLNRDEVSAEVVEKEKEIMRTKALESGKPEKIVEKIIAGQINKYFGEVCLLEQAYVIDPDLTVTKVVENLGKEIGAEVTLSRYVRFQLGEGLEKRSDDFAAEVASMTK</sequence>
<name>EFTS_SYNC1</name>
<proteinExistence type="inferred from homology"/>
<feature type="chain" id="PRO_0000241504" description="Elongation factor Ts">
    <location>
        <begin position="1"/>
        <end position="303"/>
    </location>
</feature>
<feature type="region of interest" description="Involved in Mg(2+) ion dislocation from EF-Tu" evidence="1">
    <location>
        <begin position="79"/>
        <end position="82"/>
    </location>
</feature>
<reference key="1">
    <citation type="submission" date="2005-10" db="EMBL/GenBank/DDBJ databases">
        <title>Complete sequence of Pelobacter carbinolicus DSM 2380.</title>
        <authorList>
            <person name="Copeland A."/>
            <person name="Lucas S."/>
            <person name="Lapidus A."/>
            <person name="Barry K."/>
            <person name="Detter J.C."/>
            <person name="Glavina T."/>
            <person name="Hammon N."/>
            <person name="Israni S."/>
            <person name="Pitluck S."/>
            <person name="Chertkov O."/>
            <person name="Schmutz J."/>
            <person name="Larimer F."/>
            <person name="Land M."/>
            <person name="Kyrpides N."/>
            <person name="Ivanova N."/>
            <person name="Richardson P."/>
        </authorList>
    </citation>
    <scope>NUCLEOTIDE SEQUENCE [LARGE SCALE GENOMIC DNA]</scope>
    <source>
        <strain>DSM 2380 / NBRC 103641 / GraBd1</strain>
    </source>
</reference>
<gene>
    <name evidence="1" type="primary">tsf</name>
    <name type="ordered locus">Pcar_1920</name>
</gene>
<evidence type="ECO:0000255" key="1">
    <source>
        <dbReference type="HAMAP-Rule" id="MF_00050"/>
    </source>
</evidence>
<organism>
    <name type="scientific">Syntrophotalea carbinolica (strain DSM 2380 / NBRC 103641 / GraBd1)</name>
    <name type="common">Pelobacter carbinolicus</name>
    <dbReference type="NCBI Taxonomy" id="338963"/>
    <lineage>
        <taxon>Bacteria</taxon>
        <taxon>Pseudomonadati</taxon>
        <taxon>Thermodesulfobacteriota</taxon>
        <taxon>Desulfuromonadia</taxon>
        <taxon>Desulfuromonadales</taxon>
        <taxon>Syntrophotaleaceae</taxon>
        <taxon>Syntrophotalea</taxon>
    </lineage>
</organism>
<dbReference type="EMBL" id="CP000142">
    <property type="protein sequence ID" value="ABA89161.1"/>
    <property type="molecule type" value="Genomic_DNA"/>
</dbReference>
<dbReference type="RefSeq" id="WP_011341666.1">
    <property type="nucleotide sequence ID" value="NC_007498.2"/>
</dbReference>
<dbReference type="SMR" id="Q3A396"/>
<dbReference type="STRING" id="338963.Pcar_1920"/>
<dbReference type="KEGG" id="pca:Pcar_1920"/>
<dbReference type="eggNOG" id="COG0264">
    <property type="taxonomic scope" value="Bacteria"/>
</dbReference>
<dbReference type="HOGENOM" id="CLU_047155_0_0_7"/>
<dbReference type="OrthoDB" id="9808348at2"/>
<dbReference type="Proteomes" id="UP000002534">
    <property type="component" value="Chromosome"/>
</dbReference>
<dbReference type="GO" id="GO:0005737">
    <property type="term" value="C:cytoplasm"/>
    <property type="evidence" value="ECO:0007669"/>
    <property type="project" value="UniProtKB-SubCell"/>
</dbReference>
<dbReference type="GO" id="GO:0003746">
    <property type="term" value="F:translation elongation factor activity"/>
    <property type="evidence" value="ECO:0007669"/>
    <property type="project" value="UniProtKB-UniRule"/>
</dbReference>
<dbReference type="CDD" id="cd14275">
    <property type="entry name" value="UBA_EF-Ts"/>
    <property type="match status" value="1"/>
</dbReference>
<dbReference type="FunFam" id="1.10.286.20:FF:000001">
    <property type="entry name" value="Elongation factor Ts"/>
    <property type="match status" value="1"/>
</dbReference>
<dbReference type="FunFam" id="1.10.8.10:FF:000001">
    <property type="entry name" value="Elongation factor Ts"/>
    <property type="match status" value="1"/>
</dbReference>
<dbReference type="Gene3D" id="1.10.286.20">
    <property type="match status" value="1"/>
</dbReference>
<dbReference type="Gene3D" id="1.10.8.10">
    <property type="entry name" value="DNA helicase RuvA subunit, C-terminal domain"/>
    <property type="match status" value="1"/>
</dbReference>
<dbReference type="Gene3D" id="3.30.479.20">
    <property type="entry name" value="Elongation factor Ts, dimerisation domain"/>
    <property type="match status" value="2"/>
</dbReference>
<dbReference type="HAMAP" id="MF_00050">
    <property type="entry name" value="EF_Ts"/>
    <property type="match status" value="1"/>
</dbReference>
<dbReference type="InterPro" id="IPR036402">
    <property type="entry name" value="EF-Ts_dimer_sf"/>
</dbReference>
<dbReference type="InterPro" id="IPR001816">
    <property type="entry name" value="Transl_elong_EFTs/EF1B"/>
</dbReference>
<dbReference type="InterPro" id="IPR014039">
    <property type="entry name" value="Transl_elong_EFTs/EF1B_dimer"/>
</dbReference>
<dbReference type="InterPro" id="IPR018101">
    <property type="entry name" value="Transl_elong_Ts_CS"/>
</dbReference>
<dbReference type="InterPro" id="IPR009060">
    <property type="entry name" value="UBA-like_sf"/>
</dbReference>
<dbReference type="NCBIfam" id="TIGR00116">
    <property type="entry name" value="tsf"/>
    <property type="match status" value="1"/>
</dbReference>
<dbReference type="PANTHER" id="PTHR11741">
    <property type="entry name" value="ELONGATION FACTOR TS"/>
    <property type="match status" value="1"/>
</dbReference>
<dbReference type="PANTHER" id="PTHR11741:SF0">
    <property type="entry name" value="ELONGATION FACTOR TS, MITOCHONDRIAL"/>
    <property type="match status" value="1"/>
</dbReference>
<dbReference type="Pfam" id="PF00889">
    <property type="entry name" value="EF_TS"/>
    <property type="match status" value="1"/>
</dbReference>
<dbReference type="SUPFAM" id="SSF54713">
    <property type="entry name" value="Elongation factor Ts (EF-Ts), dimerisation domain"/>
    <property type="match status" value="2"/>
</dbReference>
<dbReference type="SUPFAM" id="SSF46934">
    <property type="entry name" value="UBA-like"/>
    <property type="match status" value="1"/>
</dbReference>
<dbReference type="PROSITE" id="PS01126">
    <property type="entry name" value="EF_TS_1"/>
    <property type="match status" value="1"/>
</dbReference>
<dbReference type="PROSITE" id="PS01127">
    <property type="entry name" value="EF_TS_2"/>
    <property type="match status" value="1"/>
</dbReference>